<accession>Q1BBQ3</accession>
<protein>
    <recommendedName>
        <fullName evidence="1">NADH-quinone oxidoreductase subunit K</fullName>
        <ecNumber evidence="1">7.1.1.-</ecNumber>
    </recommendedName>
    <alternativeName>
        <fullName evidence="1">NADH dehydrogenase I subunit K</fullName>
    </alternativeName>
    <alternativeName>
        <fullName evidence="1">NDH-1 subunit K</fullName>
    </alternativeName>
</protein>
<reference key="1">
    <citation type="submission" date="2006-06" db="EMBL/GenBank/DDBJ databases">
        <title>Complete sequence of chromosome of Mycobacterium sp. MCS.</title>
        <authorList>
            <consortium name="US DOE Joint Genome Institute"/>
            <person name="Copeland A."/>
            <person name="Lucas S."/>
            <person name="Lapidus A."/>
            <person name="Barry K."/>
            <person name="Detter J.C."/>
            <person name="Glavina del Rio T."/>
            <person name="Hammon N."/>
            <person name="Israni S."/>
            <person name="Dalin E."/>
            <person name="Tice H."/>
            <person name="Pitluck S."/>
            <person name="Martinez M."/>
            <person name="Schmutz J."/>
            <person name="Larimer F."/>
            <person name="Land M."/>
            <person name="Hauser L."/>
            <person name="Kyrpides N."/>
            <person name="Kim E."/>
            <person name="Miller C.D."/>
            <person name="Hughes J.E."/>
            <person name="Anderson A.J."/>
            <person name="Sims R.C."/>
            <person name="Richardson P."/>
        </authorList>
    </citation>
    <scope>NUCLEOTIDE SEQUENCE [LARGE SCALE GENOMIC DNA]</scope>
    <source>
        <strain>MCS</strain>
    </source>
</reference>
<sequence>MNPDNYLHLSALLFTIGAAGVLLRRNVIVVFMCVELMLNAANLAFVAFSRMHGQLDGQVVAFFTMVVAACEVVIGLAIIMTIYRARRSASVDDANLLKH</sequence>
<evidence type="ECO:0000255" key="1">
    <source>
        <dbReference type="HAMAP-Rule" id="MF_01456"/>
    </source>
</evidence>
<name>NUOK_MYCSS</name>
<proteinExistence type="inferred from homology"/>
<gene>
    <name evidence="1" type="primary">nuoK</name>
    <name type="ordered locus">Mmcs_1570</name>
</gene>
<organism>
    <name type="scientific">Mycobacterium sp. (strain MCS)</name>
    <dbReference type="NCBI Taxonomy" id="164756"/>
    <lineage>
        <taxon>Bacteria</taxon>
        <taxon>Bacillati</taxon>
        <taxon>Actinomycetota</taxon>
        <taxon>Actinomycetes</taxon>
        <taxon>Mycobacteriales</taxon>
        <taxon>Mycobacteriaceae</taxon>
        <taxon>Mycobacterium</taxon>
    </lineage>
</organism>
<dbReference type="EC" id="7.1.1.-" evidence="1"/>
<dbReference type="EMBL" id="CP000384">
    <property type="protein sequence ID" value="ABG07681.1"/>
    <property type="molecule type" value="Genomic_DNA"/>
</dbReference>
<dbReference type="SMR" id="Q1BBQ3"/>
<dbReference type="KEGG" id="mmc:Mmcs_1570"/>
<dbReference type="HOGENOM" id="CLU_144724_0_0_11"/>
<dbReference type="BioCyc" id="MSP164756:G1G6O-1607-MONOMER"/>
<dbReference type="GO" id="GO:0030964">
    <property type="term" value="C:NADH dehydrogenase complex"/>
    <property type="evidence" value="ECO:0007669"/>
    <property type="project" value="TreeGrafter"/>
</dbReference>
<dbReference type="GO" id="GO:0005886">
    <property type="term" value="C:plasma membrane"/>
    <property type="evidence" value="ECO:0007669"/>
    <property type="project" value="UniProtKB-SubCell"/>
</dbReference>
<dbReference type="GO" id="GO:0050136">
    <property type="term" value="F:NADH:ubiquinone reductase (non-electrogenic) activity"/>
    <property type="evidence" value="ECO:0007669"/>
    <property type="project" value="UniProtKB-UniRule"/>
</dbReference>
<dbReference type="GO" id="GO:0048038">
    <property type="term" value="F:quinone binding"/>
    <property type="evidence" value="ECO:0007669"/>
    <property type="project" value="UniProtKB-KW"/>
</dbReference>
<dbReference type="GO" id="GO:0042773">
    <property type="term" value="P:ATP synthesis coupled electron transport"/>
    <property type="evidence" value="ECO:0007669"/>
    <property type="project" value="InterPro"/>
</dbReference>
<dbReference type="FunFam" id="1.10.287.3510:FF:000001">
    <property type="entry name" value="NADH-quinone oxidoreductase subunit K"/>
    <property type="match status" value="1"/>
</dbReference>
<dbReference type="Gene3D" id="1.10.287.3510">
    <property type="match status" value="1"/>
</dbReference>
<dbReference type="HAMAP" id="MF_01456">
    <property type="entry name" value="NDH1_NuoK"/>
    <property type="match status" value="1"/>
</dbReference>
<dbReference type="InterPro" id="IPR001133">
    <property type="entry name" value="NADH_UbQ_OxRdtase_chain4L/K"/>
</dbReference>
<dbReference type="InterPro" id="IPR039428">
    <property type="entry name" value="NUOK/Mnh_C1-like"/>
</dbReference>
<dbReference type="NCBIfam" id="NF004320">
    <property type="entry name" value="PRK05715.1-2"/>
    <property type="match status" value="1"/>
</dbReference>
<dbReference type="NCBIfam" id="NF004321">
    <property type="entry name" value="PRK05715.1-3"/>
    <property type="match status" value="1"/>
</dbReference>
<dbReference type="NCBIfam" id="NF004323">
    <property type="entry name" value="PRK05715.1-5"/>
    <property type="match status" value="1"/>
</dbReference>
<dbReference type="PANTHER" id="PTHR11434:SF21">
    <property type="entry name" value="NADH DEHYDROGENASE SUBUNIT 4L-RELATED"/>
    <property type="match status" value="1"/>
</dbReference>
<dbReference type="PANTHER" id="PTHR11434">
    <property type="entry name" value="NADH-UBIQUINONE OXIDOREDUCTASE SUBUNIT ND4L"/>
    <property type="match status" value="1"/>
</dbReference>
<dbReference type="Pfam" id="PF00420">
    <property type="entry name" value="Oxidored_q2"/>
    <property type="match status" value="1"/>
</dbReference>
<keyword id="KW-1003">Cell membrane</keyword>
<keyword id="KW-0472">Membrane</keyword>
<keyword id="KW-0520">NAD</keyword>
<keyword id="KW-0874">Quinone</keyword>
<keyword id="KW-1278">Translocase</keyword>
<keyword id="KW-0812">Transmembrane</keyword>
<keyword id="KW-1133">Transmembrane helix</keyword>
<keyword id="KW-0813">Transport</keyword>
<feature type="chain" id="PRO_0000390134" description="NADH-quinone oxidoreductase subunit K">
    <location>
        <begin position="1"/>
        <end position="99"/>
    </location>
</feature>
<feature type="transmembrane region" description="Helical" evidence="1">
    <location>
        <begin position="3"/>
        <end position="23"/>
    </location>
</feature>
<feature type="transmembrane region" description="Helical" evidence="1">
    <location>
        <begin position="28"/>
        <end position="48"/>
    </location>
</feature>
<feature type="transmembrane region" description="Helical" evidence="1">
    <location>
        <begin position="59"/>
        <end position="79"/>
    </location>
</feature>
<comment type="function">
    <text evidence="1">NDH-1 shuttles electrons from NADH, via FMN and iron-sulfur (Fe-S) centers, to quinones in the respiratory chain. The immediate electron acceptor for the enzyme in this species is believed to be a menaquinone. Couples the redox reaction to proton translocation (for every two electrons transferred, four hydrogen ions are translocated across the cytoplasmic membrane), and thus conserves the redox energy in a proton gradient.</text>
</comment>
<comment type="catalytic activity">
    <reaction evidence="1">
        <text>a quinone + NADH + 5 H(+)(in) = a quinol + NAD(+) + 4 H(+)(out)</text>
        <dbReference type="Rhea" id="RHEA:57888"/>
        <dbReference type="ChEBI" id="CHEBI:15378"/>
        <dbReference type="ChEBI" id="CHEBI:24646"/>
        <dbReference type="ChEBI" id="CHEBI:57540"/>
        <dbReference type="ChEBI" id="CHEBI:57945"/>
        <dbReference type="ChEBI" id="CHEBI:132124"/>
    </reaction>
</comment>
<comment type="subunit">
    <text evidence="1">NDH-1 is composed of 14 different subunits. Subunits NuoA, H, J, K, L, M, N constitute the membrane sector of the complex.</text>
</comment>
<comment type="subcellular location">
    <subcellularLocation>
        <location evidence="1">Cell membrane</location>
        <topology evidence="1">Multi-pass membrane protein</topology>
    </subcellularLocation>
</comment>
<comment type="similarity">
    <text evidence="1">Belongs to the complex I subunit 4L family.</text>
</comment>